<protein>
    <recommendedName>
        <fullName evidence="1">3-dehydroquinate synthase</fullName>
        <shortName evidence="1">DHQS</shortName>
        <ecNumber evidence="1">4.2.3.4</ecNumber>
    </recommendedName>
</protein>
<evidence type="ECO:0000255" key="1">
    <source>
        <dbReference type="HAMAP-Rule" id="MF_00110"/>
    </source>
</evidence>
<comment type="function">
    <text evidence="1">Catalyzes the conversion of 3-deoxy-D-arabino-heptulosonate 7-phosphate (DAHP) to dehydroquinate (DHQ).</text>
</comment>
<comment type="catalytic activity">
    <reaction evidence="1">
        <text>7-phospho-2-dehydro-3-deoxy-D-arabino-heptonate = 3-dehydroquinate + phosphate</text>
        <dbReference type="Rhea" id="RHEA:21968"/>
        <dbReference type="ChEBI" id="CHEBI:32364"/>
        <dbReference type="ChEBI" id="CHEBI:43474"/>
        <dbReference type="ChEBI" id="CHEBI:58394"/>
        <dbReference type="EC" id="4.2.3.4"/>
    </reaction>
</comment>
<comment type="cofactor">
    <cofactor evidence="1">
        <name>Co(2+)</name>
        <dbReference type="ChEBI" id="CHEBI:48828"/>
    </cofactor>
    <cofactor evidence="1">
        <name>Zn(2+)</name>
        <dbReference type="ChEBI" id="CHEBI:29105"/>
    </cofactor>
    <text evidence="1">Binds 1 divalent metal cation per subunit. Can use either Co(2+) or Zn(2+).</text>
</comment>
<comment type="cofactor">
    <cofactor evidence="1">
        <name>NAD(+)</name>
        <dbReference type="ChEBI" id="CHEBI:57540"/>
    </cofactor>
</comment>
<comment type="pathway">
    <text evidence="1">Metabolic intermediate biosynthesis; chorismate biosynthesis; chorismate from D-erythrose 4-phosphate and phosphoenolpyruvate: step 2/7.</text>
</comment>
<comment type="subcellular location">
    <subcellularLocation>
        <location evidence="1">Cytoplasm</location>
    </subcellularLocation>
</comment>
<comment type="similarity">
    <text evidence="1">Belongs to the sugar phosphate cyclases superfamily. Dehydroquinate synthase family.</text>
</comment>
<keyword id="KW-0028">Amino-acid biosynthesis</keyword>
<keyword id="KW-0057">Aromatic amino acid biosynthesis</keyword>
<keyword id="KW-0170">Cobalt</keyword>
<keyword id="KW-0963">Cytoplasm</keyword>
<keyword id="KW-0456">Lyase</keyword>
<keyword id="KW-0479">Metal-binding</keyword>
<keyword id="KW-0520">NAD</keyword>
<keyword id="KW-0547">Nucleotide-binding</keyword>
<keyword id="KW-0862">Zinc</keyword>
<proteinExistence type="inferred from homology"/>
<accession>B5EP40</accession>
<organism>
    <name type="scientific">Acidithiobacillus ferrooxidans (strain ATCC 53993 / BNL-5-31)</name>
    <name type="common">Leptospirillum ferrooxidans (ATCC 53993)</name>
    <dbReference type="NCBI Taxonomy" id="380394"/>
    <lineage>
        <taxon>Bacteria</taxon>
        <taxon>Pseudomonadati</taxon>
        <taxon>Pseudomonadota</taxon>
        <taxon>Acidithiobacillia</taxon>
        <taxon>Acidithiobacillales</taxon>
        <taxon>Acidithiobacillaceae</taxon>
        <taxon>Acidithiobacillus</taxon>
    </lineage>
</organism>
<reference key="1">
    <citation type="submission" date="2008-08" db="EMBL/GenBank/DDBJ databases">
        <title>Complete sequence of Acidithiobacillus ferrooxidans ATCC 53993.</title>
        <authorList>
            <person name="Lucas S."/>
            <person name="Copeland A."/>
            <person name="Lapidus A."/>
            <person name="Glavina del Rio T."/>
            <person name="Dalin E."/>
            <person name="Tice H."/>
            <person name="Bruce D."/>
            <person name="Goodwin L."/>
            <person name="Pitluck S."/>
            <person name="Sims D."/>
            <person name="Brettin T."/>
            <person name="Detter J.C."/>
            <person name="Han C."/>
            <person name="Kuske C.R."/>
            <person name="Larimer F."/>
            <person name="Land M."/>
            <person name="Hauser L."/>
            <person name="Kyrpides N."/>
            <person name="Lykidis A."/>
            <person name="Borole A.P."/>
        </authorList>
    </citation>
    <scope>NUCLEOTIDE SEQUENCE [LARGE SCALE GENOMIC DNA]</scope>
    <source>
        <strain>ATCC 53993 / BNL-5-31</strain>
    </source>
</reference>
<gene>
    <name evidence="1" type="primary">aroB</name>
    <name type="ordered locus">Lferr_0881</name>
</gene>
<name>AROB_ACIF5</name>
<sequence length="364" mass="38695">MRSLCVDLGQRSYPIHTGTGILADSALFAPALSKGPVAVVTDSNVAPLYLETLQKTLKALDKPSLSIILPAGEESKSLDNIQEIAGRLLSAGYGRDCTLCALGGGVVGDITGFAAAVYQRGVAYIQVPTTLLAMVDSSVGGKTGVNHPLGKNMIGAFYQPQAVIADTDTLDSLPEREFRSGLAEVIKYGLINDQGFFSWLEDHMDAVLAREPDALTKVIRHSCKDKADIVARDELEGGLRAILNLGHTFGHAIEAATGYGQYLHGEAVAIGMVMAADLSRRLDLIRESEQDRIYALVEATGLPTLAPALPVADYLGFMRVDKKAEGGRVRFILLRGIGSAVITGEVPPAAITQTLQAFMEHGHA</sequence>
<feature type="chain" id="PRO_1000094443" description="3-dehydroquinate synthase">
    <location>
        <begin position="1"/>
        <end position="364"/>
    </location>
</feature>
<feature type="binding site" evidence="1">
    <location>
        <begin position="105"/>
        <end position="109"/>
    </location>
    <ligand>
        <name>NAD(+)</name>
        <dbReference type="ChEBI" id="CHEBI:57540"/>
    </ligand>
</feature>
<feature type="binding site" evidence="1">
    <location>
        <begin position="129"/>
        <end position="130"/>
    </location>
    <ligand>
        <name>NAD(+)</name>
        <dbReference type="ChEBI" id="CHEBI:57540"/>
    </ligand>
</feature>
<feature type="binding site" evidence="1">
    <location>
        <position position="142"/>
    </location>
    <ligand>
        <name>NAD(+)</name>
        <dbReference type="ChEBI" id="CHEBI:57540"/>
    </ligand>
</feature>
<feature type="binding site" evidence="1">
    <location>
        <position position="151"/>
    </location>
    <ligand>
        <name>NAD(+)</name>
        <dbReference type="ChEBI" id="CHEBI:57540"/>
    </ligand>
</feature>
<feature type="binding site" evidence="1">
    <location>
        <position position="184"/>
    </location>
    <ligand>
        <name>Zn(2+)</name>
        <dbReference type="ChEBI" id="CHEBI:29105"/>
    </ligand>
</feature>
<feature type="binding site" evidence="1">
    <location>
        <position position="247"/>
    </location>
    <ligand>
        <name>Zn(2+)</name>
        <dbReference type="ChEBI" id="CHEBI:29105"/>
    </ligand>
</feature>
<feature type="binding site" evidence="1">
    <location>
        <position position="264"/>
    </location>
    <ligand>
        <name>Zn(2+)</name>
        <dbReference type="ChEBI" id="CHEBI:29105"/>
    </ligand>
</feature>
<dbReference type="EC" id="4.2.3.4" evidence="1"/>
<dbReference type="EMBL" id="CP001132">
    <property type="protein sequence ID" value="ACH83131.1"/>
    <property type="molecule type" value="Genomic_DNA"/>
</dbReference>
<dbReference type="RefSeq" id="WP_012536317.1">
    <property type="nucleotide sequence ID" value="NC_011206.1"/>
</dbReference>
<dbReference type="SMR" id="B5EP40"/>
<dbReference type="GeneID" id="65280080"/>
<dbReference type="KEGG" id="afe:Lferr_0881"/>
<dbReference type="eggNOG" id="COG0337">
    <property type="taxonomic scope" value="Bacteria"/>
</dbReference>
<dbReference type="HOGENOM" id="CLU_001201_0_2_6"/>
<dbReference type="UniPathway" id="UPA00053">
    <property type="reaction ID" value="UER00085"/>
</dbReference>
<dbReference type="GO" id="GO:0005737">
    <property type="term" value="C:cytoplasm"/>
    <property type="evidence" value="ECO:0007669"/>
    <property type="project" value="UniProtKB-SubCell"/>
</dbReference>
<dbReference type="GO" id="GO:0003856">
    <property type="term" value="F:3-dehydroquinate synthase activity"/>
    <property type="evidence" value="ECO:0007669"/>
    <property type="project" value="UniProtKB-UniRule"/>
</dbReference>
<dbReference type="GO" id="GO:0046872">
    <property type="term" value="F:metal ion binding"/>
    <property type="evidence" value="ECO:0007669"/>
    <property type="project" value="UniProtKB-KW"/>
</dbReference>
<dbReference type="GO" id="GO:0000166">
    <property type="term" value="F:nucleotide binding"/>
    <property type="evidence" value="ECO:0007669"/>
    <property type="project" value="UniProtKB-KW"/>
</dbReference>
<dbReference type="GO" id="GO:0008652">
    <property type="term" value="P:amino acid biosynthetic process"/>
    <property type="evidence" value="ECO:0007669"/>
    <property type="project" value="UniProtKB-KW"/>
</dbReference>
<dbReference type="GO" id="GO:0009073">
    <property type="term" value="P:aromatic amino acid family biosynthetic process"/>
    <property type="evidence" value="ECO:0007669"/>
    <property type="project" value="UniProtKB-KW"/>
</dbReference>
<dbReference type="GO" id="GO:0009423">
    <property type="term" value="P:chorismate biosynthetic process"/>
    <property type="evidence" value="ECO:0007669"/>
    <property type="project" value="UniProtKB-UniRule"/>
</dbReference>
<dbReference type="CDD" id="cd08195">
    <property type="entry name" value="DHQS"/>
    <property type="match status" value="1"/>
</dbReference>
<dbReference type="FunFam" id="3.40.50.1970:FF:000001">
    <property type="entry name" value="3-dehydroquinate synthase"/>
    <property type="match status" value="1"/>
</dbReference>
<dbReference type="Gene3D" id="3.40.50.1970">
    <property type="match status" value="1"/>
</dbReference>
<dbReference type="Gene3D" id="1.20.1090.10">
    <property type="entry name" value="Dehydroquinate synthase-like - alpha domain"/>
    <property type="match status" value="1"/>
</dbReference>
<dbReference type="HAMAP" id="MF_00110">
    <property type="entry name" value="DHQ_synthase"/>
    <property type="match status" value="1"/>
</dbReference>
<dbReference type="InterPro" id="IPR050071">
    <property type="entry name" value="Dehydroquinate_synthase"/>
</dbReference>
<dbReference type="InterPro" id="IPR016037">
    <property type="entry name" value="DHQ_synth_AroB"/>
</dbReference>
<dbReference type="InterPro" id="IPR030963">
    <property type="entry name" value="DHQ_synth_fam"/>
</dbReference>
<dbReference type="InterPro" id="IPR030960">
    <property type="entry name" value="DHQS/DOIS_N"/>
</dbReference>
<dbReference type="InterPro" id="IPR056179">
    <property type="entry name" value="DHQS_C"/>
</dbReference>
<dbReference type="NCBIfam" id="TIGR01357">
    <property type="entry name" value="aroB"/>
    <property type="match status" value="1"/>
</dbReference>
<dbReference type="PANTHER" id="PTHR43622">
    <property type="entry name" value="3-DEHYDROQUINATE SYNTHASE"/>
    <property type="match status" value="1"/>
</dbReference>
<dbReference type="PANTHER" id="PTHR43622:SF7">
    <property type="entry name" value="3-DEHYDROQUINATE SYNTHASE, CHLOROPLASTIC"/>
    <property type="match status" value="1"/>
</dbReference>
<dbReference type="Pfam" id="PF01761">
    <property type="entry name" value="DHQ_synthase"/>
    <property type="match status" value="1"/>
</dbReference>
<dbReference type="Pfam" id="PF24621">
    <property type="entry name" value="DHQS_C"/>
    <property type="match status" value="1"/>
</dbReference>
<dbReference type="PIRSF" id="PIRSF001455">
    <property type="entry name" value="DHQ_synth"/>
    <property type="match status" value="1"/>
</dbReference>
<dbReference type="SUPFAM" id="SSF56796">
    <property type="entry name" value="Dehydroquinate synthase-like"/>
    <property type="match status" value="1"/>
</dbReference>